<keyword id="KW-0342">GTP-binding</keyword>
<keyword id="KW-0378">Hydrolase</keyword>
<keyword id="KW-0472">Membrane</keyword>
<keyword id="KW-0496">Mitochondrion</keyword>
<keyword id="KW-0999">Mitochondrion inner membrane</keyword>
<keyword id="KW-0547">Nucleotide-binding</keyword>
<keyword id="KW-0648">Protein biosynthesis</keyword>
<keyword id="KW-1185">Reference proteome</keyword>
<keyword id="KW-0809">Transit peptide</keyword>
<comment type="function">
    <text evidence="1">Promotes mitochondrial protein synthesis. May act as a fidelity factor of the translation reaction, by catalyzing a one-codon backward translocation of tRNAs on improperly translocated ribosomes. Binds to mitochondrial ribosomes in a GTP-dependent manner.</text>
</comment>
<comment type="catalytic activity">
    <reaction evidence="1">
        <text>GTP + H2O = GDP + phosphate + H(+)</text>
        <dbReference type="Rhea" id="RHEA:19669"/>
        <dbReference type="ChEBI" id="CHEBI:15377"/>
        <dbReference type="ChEBI" id="CHEBI:15378"/>
        <dbReference type="ChEBI" id="CHEBI:37565"/>
        <dbReference type="ChEBI" id="CHEBI:43474"/>
        <dbReference type="ChEBI" id="CHEBI:58189"/>
    </reaction>
</comment>
<comment type="subcellular location">
    <subcellularLocation>
        <location evidence="1">Mitochondrion inner membrane</location>
        <topology evidence="1">Peripheral membrane protein</topology>
        <orientation evidence="1">Matrix side</orientation>
    </subcellularLocation>
</comment>
<comment type="similarity">
    <text evidence="3">Belongs to the TRAFAC class translation factor GTPase superfamily. Classic translation factor GTPase family. LepA subfamily.</text>
</comment>
<reference key="1">
    <citation type="journal article" date="2009" name="Nature">
        <title>The Sorghum bicolor genome and the diversification of grasses.</title>
        <authorList>
            <person name="Paterson A.H."/>
            <person name="Bowers J.E."/>
            <person name="Bruggmann R."/>
            <person name="Dubchak I."/>
            <person name="Grimwood J."/>
            <person name="Gundlach H."/>
            <person name="Haberer G."/>
            <person name="Hellsten U."/>
            <person name="Mitros T."/>
            <person name="Poliakov A."/>
            <person name="Schmutz J."/>
            <person name="Spannagl M."/>
            <person name="Tang H."/>
            <person name="Wang X."/>
            <person name="Wicker T."/>
            <person name="Bharti A.K."/>
            <person name="Chapman J."/>
            <person name="Feltus F.A."/>
            <person name="Gowik U."/>
            <person name="Grigoriev I.V."/>
            <person name="Lyons E."/>
            <person name="Maher C.A."/>
            <person name="Martis M."/>
            <person name="Narechania A."/>
            <person name="Otillar R.P."/>
            <person name="Penning B.W."/>
            <person name="Salamov A.A."/>
            <person name="Wang Y."/>
            <person name="Zhang L."/>
            <person name="Carpita N.C."/>
            <person name="Freeling M."/>
            <person name="Gingle A.R."/>
            <person name="Hash C.T."/>
            <person name="Keller B."/>
            <person name="Klein P."/>
            <person name="Kresovich S."/>
            <person name="McCann M.C."/>
            <person name="Ming R."/>
            <person name="Peterson D.G."/>
            <person name="Mehboob-ur-Rahman M."/>
            <person name="Ware D."/>
            <person name="Westhoff P."/>
            <person name="Mayer K.F.X."/>
            <person name="Messing J."/>
            <person name="Rokhsar D.S."/>
        </authorList>
    </citation>
    <scope>NUCLEOTIDE SEQUENCE [LARGE SCALE GENOMIC DNA]</scope>
    <source>
        <strain>cv. BTx623</strain>
    </source>
</reference>
<reference key="2">
    <citation type="journal article" date="2018" name="Plant J.">
        <title>The Sorghum bicolor reference genome: improved assembly, gene annotations, a transcriptome atlas, and signatures of genome organization.</title>
        <authorList>
            <person name="McCormick R.F."/>
            <person name="Truong S.K."/>
            <person name="Sreedasyam A."/>
            <person name="Jenkins J."/>
            <person name="Shu S."/>
            <person name="Sims D."/>
            <person name="Kennedy M."/>
            <person name="Amirebrahimi M."/>
            <person name="Weers B.D."/>
            <person name="McKinley B."/>
            <person name="Mattison A."/>
            <person name="Morishige D.T."/>
            <person name="Grimwood J."/>
            <person name="Schmutz J."/>
            <person name="Mullet J.E."/>
        </authorList>
    </citation>
    <scope>GENOME REANNOTATION</scope>
    <source>
        <strain>cv. BTx623</strain>
    </source>
</reference>
<proteinExistence type="inferred from homology"/>
<gene>
    <name type="ordered locus">Sb10g003070</name>
</gene>
<organism>
    <name type="scientific">Sorghum bicolor</name>
    <name type="common">Sorghum</name>
    <name type="synonym">Sorghum vulgare</name>
    <dbReference type="NCBI Taxonomy" id="4558"/>
    <lineage>
        <taxon>Eukaryota</taxon>
        <taxon>Viridiplantae</taxon>
        <taxon>Streptophyta</taxon>
        <taxon>Embryophyta</taxon>
        <taxon>Tracheophyta</taxon>
        <taxon>Spermatophyta</taxon>
        <taxon>Magnoliopsida</taxon>
        <taxon>Liliopsida</taxon>
        <taxon>Poales</taxon>
        <taxon>Poaceae</taxon>
        <taxon>PACMAD clade</taxon>
        <taxon>Panicoideae</taxon>
        <taxon>Andropogonodae</taxon>
        <taxon>Andropogoneae</taxon>
        <taxon>Sorghinae</taxon>
        <taxon>Sorghum</taxon>
    </lineage>
</organism>
<accession>C5Z3W1</accession>
<feature type="transit peptide" description="Mitochondrion" evidence="1">
    <location>
        <begin position="1"/>
        <end position="35"/>
    </location>
</feature>
<feature type="chain" id="PRO_0000402850" description="Translation factor GUF1 homolog, mitochondrial">
    <location>
        <begin position="36"/>
        <end position="665"/>
    </location>
</feature>
<feature type="domain" description="tr-type G">
    <location>
        <begin position="61"/>
        <end position="249"/>
    </location>
</feature>
<feature type="region of interest" description="Disordered" evidence="2">
    <location>
        <begin position="34"/>
        <end position="53"/>
    </location>
</feature>
<feature type="binding site" evidence="1">
    <location>
        <begin position="70"/>
        <end position="77"/>
    </location>
    <ligand>
        <name>GTP</name>
        <dbReference type="ChEBI" id="CHEBI:37565"/>
    </ligand>
</feature>
<feature type="binding site" evidence="1">
    <location>
        <begin position="142"/>
        <end position="146"/>
    </location>
    <ligand>
        <name>GTP</name>
        <dbReference type="ChEBI" id="CHEBI:37565"/>
    </ligand>
</feature>
<feature type="binding site" evidence="1">
    <location>
        <begin position="196"/>
        <end position="199"/>
    </location>
    <ligand>
        <name>GTP</name>
        <dbReference type="ChEBI" id="CHEBI:37565"/>
    </ligand>
</feature>
<name>GUF1_SORBI</name>
<dbReference type="EC" id="3.6.5.-"/>
<dbReference type="EMBL" id="CM000769">
    <property type="protein sequence ID" value="EER89181.1"/>
    <property type="molecule type" value="Genomic_DNA"/>
</dbReference>
<dbReference type="SMR" id="C5Z3W1"/>
<dbReference type="FunCoup" id="C5Z3W1">
    <property type="interactions" value="1869"/>
</dbReference>
<dbReference type="STRING" id="4558.C5Z3W1"/>
<dbReference type="EnsemblPlants" id="EER89181">
    <property type="protein sequence ID" value="EER89181"/>
    <property type="gene ID" value="SORBI_3010G034100"/>
</dbReference>
<dbReference type="Gramene" id="EER89181">
    <property type="protein sequence ID" value="EER89181"/>
    <property type="gene ID" value="SORBI_3010G034100"/>
</dbReference>
<dbReference type="KEGG" id="sbi:8068764"/>
<dbReference type="eggNOG" id="KOG0462">
    <property type="taxonomic scope" value="Eukaryota"/>
</dbReference>
<dbReference type="HOGENOM" id="CLU_009995_3_3_1"/>
<dbReference type="InParanoid" id="C5Z3W1"/>
<dbReference type="OMA" id="HADVFHQ"/>
<dbReference type="OrthoDB" id="1074at2759"/>
<dbReference type="Proteomes" id="UP000000768">
    <property type="component" value="Chromosome 10"/>
</dbReference>
<dbReference type="GO" id="GO:0005743">
    <property type="term" value="C:mitochondrial inner membrane"/>
    <property type="evidence" value="ECO:0007669"/>
    <property type="project" value="UniProtKB-SubCell"/>
</dbReference>
<dbReference type="GO" id="GO:0005759">
    <property type="term" value="C:mitochondrial matrix"/>
    <property type="evidence" value="ECO:0007669"/>
    <property type="project" value="UniProtKB-UniRule"/>
</dbReference>
<dbReference type="GO" id="GO:0005739">
    <property type="term" value="C:mitochondrion"/>
    <property type="evidence" value="ECO:0000318"/>
    <property type="project" value="GO_Central"/>
</dbReference>
<dbReference type="GO" id="GO:0005525">
    <property type="term" value="F:GTP binding"/>
    <property type="evidence" value="ECO:0007669"/>
    <property type="project" value="UniProtKB-UniRule"/>
</dbReference>
<dbReference type="GO" id="GO:0003924">
    <property type="term" value="F:GTPase activity"/>
    <property type="evidence" value="ECO:0007669"/>
    <property type="project" value="UniProtKB-UniRule"/>
</dbReference>
<dbReference type="GO" id="GO:0097177">
    <property type="term" value="F:mitochondrial ribosome binding"/>
    <property type="evidence" value="ECO:0000318"/>
    <property type="project" value="GO_Central"/>
</dbReference>
<dbReference type="GO" id="GO:0045727">
    <property type="term" value="P:positive regulation of translation"/>
    <property type="evidence" value="ECO:0000318"/>
    <property type="project" value="GO_Central"/>
</dbReference>
<dbReference type="GO" id="GO:0006412">
    <property type="term" value="P:translation"/>
    <property type="evidence" value="ECO:0007669"/>
    <property type="project" value="UniProtKB-KW"/>
</dbReference>
<dbReference type="CDD" id="cd03699">
    <property type="entry name" value="EF4_II"/>
    <property type="match status" value="1"/>
</dbReference>
<dbReference type="CDD" id="cd16260">
    <property type="entry name" value="EF4_III"/>
    <property type="match status" value="1"/>
</dbReference>
<dbReference type="CDD" id="cd01890">
    <property type="entry name" value="LepA"/>
    <property type="match status" value="1"/>
</dbReference>
<dbReference type="CDD" id="cd03709">
    <property type="entry name" value="lepA_C"/>
    <property type="match status" value="1"/>
</dbReference>
<dbReference type="FunFam" id="3.40.50.300:FF:000078">
    <property type="entry name" value="Elongation factor 4"/>
    <property type="match status" value="1"/>
</dbReference>
<dbReference type="FunFam" id="2.40.30.10:FF:000015">
    <property type="entry name" value="Translation factor GUF1, mitochondrial"/>
    <property type="match status" value="1"/>
</dbReference>
<dbReference type="FunFam" id="3.30.70.240:FF:000007">
    <property type="entry name" value="Translation factor GUF1, mitochondrial"/>
    <property type="match status" value="1"/>
</dbReference>
<dbReference type="FunFam" id="3.30.70.2570:FF:000001">
    <property type="entry name" value="Translation factor GUF1, mitochondrial"/>
    <property type="match status" value="1"/>
</dbReference>
<dbReference type="FunFam" id="3.30.70.870:FF:000004">
    <property type="entry name" value="Translation factor GUF1, mitochondrial"/>
    <property type="match status" value="1"/>
</dbReference>
<dbReference type="Gene3D" id="3.30.70.240">
    <property type="match status" value="1"/>
</dbReference>
<dbReference type="Gene3D" id="3.30.70.2570">
    <property type="entry name" value="Elongation factor 4, C-terminal domain"/>
    <property type="match status" value="1"/>
</dbReference>
<dbReference type="Gene3D" id="3.30.70.870">
    <property type="entry name" value="Elongation Factor G (Translational Gtpase), domain 3"/>
    <property type="match status" value="1"/>
</dbReference>
<dbReference type="Gene3D" id="3.40.50.300">
    <property type="entry name" value="P-loop containing nucleotide triphosphate hydrolases"/>
    <property type="match status" value="1"/>
</dbReference>
<dbReference type="Gene3D" id="2.40.30.10">
    <property type="entry name" value="Translation factors"/>
    <property type="match status" value="1"/>
</dbReference>
<dbReference type="HAMAP" id="MF_00071">
    <property type="entry name" value="LepA"/>
    <property type="match status" value="1"/>
</dbReference>
<dbReference type="InterPro" id="IPR006297">
    <property type="entry name" value="EF-4"/>
</dbReference>
<dbReference type="InterPro" id="IPR035647">
    <property type="entry name" value="EFG_III/V"/>
</dbReference>
<dbReference type="InterPro" id="IPR000640">
    <property type="entry name" value="EFG_V-like"/>
</dbReference>
<dbReference type="InterPro" id="IPR004161">
    <property type="entry name" value="EFTu-like_2"/>
</dbReference>
<dbReference type="InterPro" id="IPR031157">
    <property type="entry name" value="G_TR_CS"/>
</dbReference>
<dbReference type="InterPro" id="IPR038363">
    <property type="entry name" value="LepA_C_sf"/>
</dbReference>
<dbReference type="InterPro" id="IPR013842">
    <property type="entry name" value="LepA_CTD"/>
</dbReference>
<dbReference type="InterPro" id="IPR035654">
    <property type="entry name" value="LepA_IV"/>
</dbReference>
<dbReference type="InterPro" id="IPR027417">
    <property type="entry name" value="P-loop_NTPase"/>
</dbReference>
<dbReference type="InterPro" id="IPR005225">
    <property type="entry name" value="Small_GTP-bd"/>
</dbReference>
<dbReference type="InterPro" id="IPR000795">
    <property type="entry name" value="T_Tr_GTP-bd_dom"/>
</dbReference>
<dbReference type="NCBIfam" id="TIGR01393">
    <property type="entry name" value="lepA"/>
    <property type="match status" value="1"/>
</dbReference>
<dbReference type="NCBIfam" id="TIGR00231">
    <property type="entry name" value="small_GTP"/>
    <property type="match status" value="1"/>
</dbReference>
<dbReference type="PANTHER" id="PTHR43512:SF7">
    <property type="entry name" value="TRANSLATION FACTOR GUF1, MITOCHONDRIAL"/>
    <property type="match status" value="1"/>
</dbReference>
<dbReference type="PANTHER" id="PTHR43512">
    <property type="entry name" value="TRANSLATION FACTOR GUF1-RELATED"/>
    <property type="match status" value="1"/>
</dbReference>
<dbReference type="Pfam" id="PF00679">
    <property type="entry name" value="EFG_C"/>
    <property type="match status" value="1"/>
</dbReference>
<dbReference type="Pfam" id="PF00009">
    <property type="entry name" value="GTP_EFTU"/>
    <property type="match status" value="1"/>
</dbReference>
<dbReference type="Pfam" id="PF03144">
    <property type="entry name" value="GTP_EFTU_D2"/>
    <property type="match status" value="1"/>
</dbReference>
<dbReference type="Pfam" id="PF06421">
    <property type="entry name" value="LepA_C"/>
    <property type="match status" value="1"/>
</dbReference>
<dbReference type="PRINTS" id="PR00315">
    <property type="entry name" value="ELONGATNFCT"/>
</dbReference>
<dbReference type="SUPFAM" id="SSF54980">
    <property type="entry name" value="EF-G C-terminal domain-like"/>
    <property type="match status" value="2"/>
</dbReference>
<dbReference type="SUPFAM" id="SSF52540">
    <property type="entry name" value="P-loop containing nucleoside triphosphate hydrolases"/>
    <property type="match status" value="1"/>
</dbReference>
<dbReference type="PROSITE" id="PS00301">
    <property type="entry name" value="G_TR_1"/>
    <property type="match status" value="1"/>
</dbReference>
<dbReference type="PROSITE" id="PS51722">
    <property type="entry name" value="G_TR_2"/>
    <property type="match status" value="1"/>
</dbReference>
<sequence length="665" mass="73222">MAGAAVLRRSARRIYRHLAAAPAFSRSVLQQPKRLLSSQSSPEHGARGAVSGSELALYPPERVRNFSIIAHVDHGKSTLADRLLELTGTIQKGHGQPQYLDKLQVERERGITVKAQTATMFYRHVSASQDSDTPKYLLNLIDTPGHVDFSYEVSRSLAACQGALLVVDAAQGVQAQTIANFYLAFESNLSIIPVINKIDQPTADPDNVKDQLKRLFDIDPSEALLTSAKTGQGLEQVLPAVIERIPSPPGKCDAPVRMLLLDSYYDEYKGVICHVAIVDGALRKGDKIASAATGRAYEVLDVGIMHPELKPTGVLYTGQVGYVISGMRSTKEARIGDTLHQAKSTVEPLPGFKPAKHMVFSGLYPADGSDFEALSHAIEKLTCNDASVSITKETSNALGMGFRCGFLGLLHMDVFHQRLEQEYGAQVISTIPTVPYIFEYGDGSKVQVENPAALASNPGKRVAACWEPTVIATIIIPSEYVGPVIMLCSERRGEQLEYTFIDAQRALLKYQLPLKEIIVDFYNELKGITSGYATFDYEDSEYQQSDLVKMDILLNGQPVDAMATIVHNQKAQRVGKELVEKLKKFIERQMFEITIQAAIGSKVIARETLSAMRKNVLAKCYGGDITRKKKLLEKQKEGKKRMKRVGSVDIPQEAFHELLKVSNSK</sequence>
<evidence type="ECO:0000255" key="1">
    <source>
        <dbReference type="HAMAP-Rule" id="MF_03137"/>
    </source>
</evidence>
<evidence type="ECO:0000256" key="2">
    <source>
        <dbReference type="SAM" id="MobiDB-lite"/>
    </source>
</evidence>
<evidence type="ECO:0000305" key="3"/>
<protein>
    <recommendedName>
        <fullName evidence="1">Translation factor GUF1 homolog, mitochondrial</fullName>
        <ecNumber>3.6.5.-</ecNumber>
    </recommendedName>
    <alternativeName>
        <fullName evidence="1">Elongation factor 4 homolog</fullName>
        <shortName evidence="1">EF-4</shortName>
    </alternativeName>
    <alternativeName>
        <fullName evidence="1">GTPase GUF1 homolog</fullName>
    </alternativeName>
    <alternativeName>
        <fullName evidence="1">Ribosomal back-translocase</fullName>
    </alternativeName>
</protein>